<reference key="1">
    <citation type="journal article" date="2004" name="Nature">
        <title>Genesis of a highly pathogenic and potentially pandemic H5N1 influenza virus in eastern Asia.</title>
        <authorList>
            <person name="Li K.S."/>
            <person name="Guan Y."/>
            <person name="Wang J."/>
            <person name="Smith G.J.D."/>
            <person name="Xu K.M."/>
            <person name="Duan L."/>
            <person name="Rahardjo A.P."/>
            <person name="Puthavathana P."/>
            <person name="Buranathai C."/>
            <person name="Nguyen T.D."/>
            <person name="Estoepangestie A.T.S."/>
            <person name="Chaisingh A."/>
            <person name="Auewarakul P."/>
            <person name="Long H.T."/>
            <person name="Hanh N.T.H."/>
            <person name="Webby R.J."/>
            <person name="Poon L.L.M."/>
            <person name="Chen H."/>
            <person name="Shortridge K.F."/>
            <person name="Yuen K.Y."/>
            <person name="Webster R.G."/>
            <person name="Peiris J.S.M."/>
        </authorList>
    </citation>
    <scope>NUCLEOTIDE SEQUENCE [GENOMIC RNA]</scope>
</reference>
<reference key="2">
    <citation type="submission" date="2008-03" db="EMBL/GenBank/DDBJ databases">
        <authorList>
            <person name="Li K.S."/>
            <person name="Guan Y."/>
            <person name="Wang J."/>
            <person name="Smith G.J.D."/>
            <person name="Xu K.M."/>
            <person name="Duan L."/>
            <person name="Rahardjo A.P."/>
            <person name="Puthavathana P."/>
            <person name="Buranathai C."/>
            <person name="Nguyen T.D."/>
            <person name="Estoepangestie A.T.S."/>
            <person name="Chaisingh A."/>
            <person name="Auewarakul P."/>
            <person name="Long H.T."/>
            <person name="Hanh N.T.H."/>
            <person name="Lim W."/>
            <person name="Webby R.J."/>
            <person name="Poon L.L.M."/>
            <person name="Chen H."/>
            <person name="Shortridge K.F."/>
            <person name="Yuen K.Y."/>
            <person name="Webster R.G."/>
            <person name="Peiris J.S.M."/>
        </authorList>
    </citation>
    <scope>SEQUENCE REVISION</scope>
</reference>
<proteinExistence type="inferred from homology"/>
<protein>
    <recommendedName>
        <fullName evidence="1">Polymerase basic protein 2</fullName>
    </recommendedName>
    <alternativeName>
        <fullName evidence="1">RNA-directed RNA polymerase subunit P3</fullName>
    </alternativeName>
</protein>
<organismHost>
    <name type="scientific">Aves</name>
    <dbReference type="NCBI Taxonomy" id="8782"/>
</organismHost>
<organismHost>
    <name type="scientific">Felis catus</name>
    <name type="common">Cat</name>
    <name type="synonym">Felis silvestris catus</name>
    <dbReference type="NCBI Taxonomy" id="9685"/>
</organismHost>
<organismHost>
    <name type="scientific">Homo sapiens</name>
    <name type="common">Human</name>
    <dbReference type="NCBI Taxonomy" id="9606"/>
</organismHost>
<organismHost>
    <name type="scientific">Panthera pardus</name>
    <name type="common">Leopard</name>
    <name type="synonym">Felis pardus</name>
    <dbReference type="NCBI Taxonomy" id="9691"/>
</organismHost>
<organismHost>
    <name type="scientific">Panthera tigris</name>
    <name type="common">Tiger</name>
    <dbReference type="NCBI Taxonomy" id="9694"/>
</organismHost>
<organismHost>
    <name type="scientific">Sus scrofa</name>
    <name type="common">Pig</name>
    <dbReference type="NCBI Taxonomy" id="9823"/>
</organismHost>
<keyword id="KW-1157">Cap snatching</keyword>
<keyword id="KW-1262">Eukaryotic host gene expression shutoff by virus</keyword>
<keyword id="KW-1191">Eukaryotic host transcription shutoff by virus</keyword>
<keyword id="KW-1190">Host gene expression shutoff by virus</keyword>
<keyword id="KW-1048">Host nucleus</keyword>
<keyword id="KW-0945">Host-virus interaction</keyword>
<keyword id="KW-1104">Inhibition of host RNA polymerase II by virus</keyword>
<keyword id="KW-0506">mRNA capping</keyword>
<keyword id="KW-0507">mRNA processing</keyword>
<keyword id="KW-1195">Viral transcription</keyword>
<keyword id="KW-0946">Virion</keyword>
<accession>Q6DNM0</accession>
<sequence>MERIKELRDLMSQSRTREILTKTTVDHMAIIKKYTSGRQEKNPALRMKWMMAMKYPITADKRIIEMIPERNEQGQTLWSKTNDAGSDRVMVSPLAVTWWNRNGPATGTVHYPKVYKTYFEKVERLKHGTFGPVHFRNQVKIRRRVDINPGHADLSAKEAQDVIMEVVFPNEVGARTLTSESQLTITKEKKEELQDCKIAPLMVAYMLERELVRKTRFLPVAGGTSSVYIEVLHLTQGTCWEQMYTPGGEVRNDDVDQSLVIAARNIVRRATVSADPLASLLEMCHSTQIGGIRMVDILRQNPTEEQAVDICKAAMGLRISSSFSFGGFTFKRTSGSSVKKEEEVLTGNLQTLKIRVHEGYEEFTMVGRRATAILRKATRRLIQLIVSGRDEQSIAEAIIVAMVFSQEDCMIKAVRGDLNFVNRANQRLNPMHQLLRHFQKDAKVLFQNWGIELIDNVMGMIGILPDMTPSTEMSLRGVRVSKMGVDEYSSTERVVVSIDRFLRVRDQRGNVLLSPEEVSETQGTEKLTITYSSSMMWEINGPESVLVNTYQWIIRNWETVKIQWSQDPTMLYNKMEFEPFQSLIPKAARGQYSGFVRTLFQQMRDVLGTFDTVQIIKLLPFTAAPPEQSRMQFSSLTVNVRGSGMRILVRGNSPVFNYNKATKRLTVLGKDAGALTEDPDEGTAGVESAVLRGFLILGKEDKRYGPALSINELSNLAKGEKANVLIGQGDVVLVMKRKRDSSILTDSQTATKRIRMP</sequence>
<name>PB2_I02A3</name>
<evidence type="ECO:0000255" key="1">
    <source>
        <dbReference type="HAMAP-Rule" id="MF_04062"/>
    </source>
</evidence>
<organism>
    <name type="scientific">Influenza A virus (strain A/Chicken/Hong Kong/37.4/2002 H5N1 genotype X2)</name>
    <dbReference type="NCBI Taxonomy" id="284172"/>
    <lineage>
        <taxon>Viruses</taxon>
        <taxon>Riboviria</taxon>
        <taxon>Orthornavirae</taxon>
        <taxon>Negarnaviricota</taxon>
        <taxon>Polyploviricotina</taxon>
        <taxon>Insthoviricetes</taxon>
        <taxon>Articulavirales</taxon>
        <taxon>Orthomyxoviridae</taxon>
        <taxon>Alphainfluenzavirus</taxon>
        <taxon>Alphainfluenzavirus influenzae</taxon>
        <taxon>Influenza A virus</taxon>
    </lineage>
</organism>
<comment type="function">
    <text evidence="1">Plays an essential role in transcription initiation and cap-stealing mechanism, in which cellular capped pre-mRNAs are used to generate primers for viral transcription. Recognizes and binds the 7-methylguanosine-containing cap of the target pre-RNA which is subsequently cleaved after 10-13 nucleotides by the viral protein PA. Plays a role in the initiation of the viral genome replication and modulates the activity of the ribonucleoprotein (RNP) complex.</text>
</comment>
<comment type="subunit">
    <text evidence="1">Influenza RNA polymerase is composed of three subunits: PB1, PB2 and PA. Interacts (via N-terminus) with PB1 (via C-terminus). Interacts with nucleoprotein NP (via N-terminus).</text>
</comment>
<comment type="subcellular location">
    <subcellularLocation>
        <location evidence="1">Virion</location>
    </subcellularLocation>
    <subcellularLocation>
        <location evidence="1">Host nucleus</location>
    </subcellularLocation>
</comment>
<comment type="similarity">
    <text evidence="1">Belongs to the influenza viruses PB2 family.</text>
</comment>
<dbReference type="EMBL" id="AY651732">
    <property type="protein sequence ID" value="AAT73563.2"/>
    <property type="molecule type" value="Genomic_RNA"/>
</dbReference>
<dbReference type="SMR" id="Q6DNM0"/>
<dbReference type="GO" id="GO:0042025">
    <property type="term" value="C:host cell nucleus"/>
    <property type="evidence" value="ECO:0007669"/>
    <property type="project" value="UniProtKB-SubCell"/>
</dbReference>
<dbReference type="GO" id="GO:0044423">
    <property type="term" value="C:virion component"/>
    <property type="evidence" value="ECO:0007669"/>
    <property type="project" value="UniProtKB-KW"/>
</dbReference>
<dbReference type="GO" id="GO:0003723">
    <property type="term" value="F:RNA binding"/>
    <property type="evidence" value="ECO:0007669"/>
    <property type="project" value="InterPro"/>
</dbReference>
<dbReference type="GO" id="GO:0006370">
    <property type="term" value="P:7-methylguanosine mRNA capping"/>
    <property type="evidence" value="ECO:0007669"/>
    <property type="project" value="UniProtKB-KW"/>
</dbReference>
<dbReference type="GO" id="GO:0075526">
    <property type="term" value="P:cap snatching"/>
    <property type="evidence" value="ECO:0007669"/>
    <property type="project" value="UniProtKB-KW"/>
</dbReference>
<dbReference type="GO" id="GO:0006351">
    <property type="term" value="P:DNA-templated transcription"/>
    <property type="evidence" value="ECO:0007669"/>
    <property type="project" value="InterPro"/>
</dbReference>
<dbReference type="GO" id="GO:0039657">
    <property type="term" value="P:symbiont-mediated suppression of host gene expression"/>
    <property type="evidence" value="ECO:0007669"/>
    <property type="project" value="UniProtKB-KW"/>
</dbReference>
<dbReference type="GO" id="GO:0039523">
    <property type="term" value="P:symbiont-mediated suppression of host mRNA transcription via inhibition of RNA polymerase II activity"/>
    <property type="evidence" value="ECO:0007669"/>
    <property type="project" value="UniProtKB-KW"/>
</dbReference>
<dbReference type="GO" id="GO:0039694">
    <property type="term" value="P:viral RNA genome replication"/>
    <property type="evidence" value="ECO:0007669"/>
    <property type="project" value="InterPro"/>
</dbReference>
<dbReference type="Gene3D" id="3.30.30.90">
    <property type="entry name" value="Polymerase Basic Protein 2, C-terminal domain"/>
    <property type="match status" value="1"/>
</dbReference>
<dbReference type="HAMAP" id="MF_04062">
    <property type="entry name" value="INV_PB2"/>
    <property type="match status" value="1"/>
</dbReference>
<dbReference type="InterPro" id="IPR049110">
    <property type="entry name" value="Flu_PB2_2nd"/>
</dbReference>
<dbReference type="InterPro" id="IPR049114">
    <property type="entry name" value="Flu_PB2_6th"/>
</dbReference>
<dbReference type="InterPro" id="IPR049115">
    <property type="entry name" value="Flu_PB2_C"/>
</dbReference>
<dbReference type="InterPro" id="IPR048298">
    <property type="entry name" value="Flu_PB2_CAP-bd"/>
</dbReference>
<dbReference type="InterPro" id="IPR049111">
    <property type="entry name" value="Flu_PB2_middle"/>
</dbReference>
<dbReference type="InterPro" id="IPR049106">
    <property type="entry name" value="Flu_PB2_N"/>
</dbReference>
<dbReference type="InterPro" id="IPR001591">
    <property type="entry name" value="INV_PB2"/>
</dbReference>
<dbReference type="InterPro" id="IPR049113">
    <property type="entry name" value="PB2_helical"/>
</dbReference>
<dbReference type="InterPro" id="IPR037258">
    <property type="entry name" value="PDB2_C"/>
</dbReference>
<dbReference type="Pfam" id="PF20947">
    <property type="entry name" value="Flu_PB2_1st"/>
    <property type="match status" value="1"/>
</dbReference>
<dbReference type="Pfam" id="PF20948">
    <property type="entry name" value="Flu_PB2_2nd"/>
    <property type="match status" value="1"/>
</dbReference>
<dbReference type="Pfam" id="PF20949">
    <property type="entry name" value="Flu_PB2_3rd"/>
    <property type="match status" value="1"/>
</dbReference>
<dbReference type="Pfam" id="PF20950">
    <property type="entry name" value="Flu_PB2_4th"/>
    <property type="match status" value="1"/>
</dbReference>
<dbReference type="Pfam" id="PF00604">
    <property type="entry name" value="Flu_PB2_5th"/>
    <property type="match status" value="1"/>
</dbReference>
<dbReference type="Pfam" id="PF20951">
    <property type="entry name" value="Flu_PB2_6th"/>
    <property type="match status" value="1"/>
</dbReference>
<dbReference type="Pfam" id="PF20952">
    <property type="entry name" value="Flu_PB2_7th"/>
    <property type="match status" value="1"/>
</dbReference>
<dbReference type="SUPFAM" id="SSF160453">
    <property type="entry name" value="PB2 C-terminal domain-like"/>
    <property type="match status" value="1"/>
</dbReference>
<feature type="chain" id="PRO_0000311150" description="Polymerase basic protein 2">
    <location>
        <begin position="1"/>
        <end position="757" status="greater than"/>
    </location>
</feature>
<feature type="short sequence motif" description="Nuclear localization signal" evidence="1">
    <location>
        <begin position="736"/>
        <end position="739"/>
    </location>
</feature>
<feature type="site" description="Avian adaptation" evidence="1">
    <location>
        <position position="627"/>
    </location>
</feature>
<feature type="non-terminal residue">
    <location>
        <position position="757"/>
    </location>
</feature>
<gene>
    <name evidence="1" type="primary">PB2</name>
</gene>